<dbReference type="EC" id="3.4.21.-"/>
<dbReference type="EMBL" id="AF133904">
    <property type="protein sequence ID" value="AAD32617.1"/>
    <property type="molecule type" value="Genomic_RNA"/>
</dbReference>
<dbReference type="EMBL" id="D10065">
    <property type="protein sequence ID" value="BAA00954.1"/>
    <property type="molecule type" value="Genomic_RNA"/>
</dbReference>
<dbReference type="PIR" id="PQ0283">
    <property type="entry name" value="GNXSIE"/>
</dbReference>
<dbReference type="SMR" id="P29802"/>
<dbReference type="MEROPS" id="S50.002"/>
<dbReference type="GO" id="GO:0030430">
    <property type="term" value="C:host cell cytoplasm"/>
    <property type="evidence" value="ECO:0007669"/>
    <property type="project" value="UniProtKB-SubCell"/>
</dbReference>
<dbReference type="GO" id="GO:0039621">
    <property type="term" value="C:T=13 icosahedral viral capsid"/>
    <property type="evidence" value="ECO:0007669"/>
    <property type="project" value="UniProtKB-KW"/>
</dbReference>
<dbReference type="GO" id="GO:0046872">
    <property type="term" value="F:metal ion binding"/>
    <property type="evidence" value="ECO:0007669"/>
    <property type="project" value="UniProtKB-KW"/>
</dbReference>
<dbReference type="GO" id="GO:0008236">
    <property type="term" value="F:serine-type peptidase activity"/>
    <property type="evidence" value="ECO:0007669"/>
    <property type="project" value="UniProtKB-KW"/>
</dbReference>
<dbReference type="GO" id="GO:0005198">
    <property type="term" value="F:structural molecule activity"/>
    <property type="evidence" value="ECO:0007669"/>
    <property type="project" value="InterPro"/>
</dbReference>
<dbReference type="GO" id="GO:0006508">
    <property type="term" value="P:proteolysis"/>
    <property type="evidence" value="ECO:0007669"/>
    <property type="project" value="UniProtKB-KW"/>
</dbReference>
<dbReference type="FunFam" id="2.60.120.660:FF:000001">
    <property type="entry name" value="Structural polyprotein"/>
    <property type="match status" value="1"/>
</dbReference>
<dbReference type="Gene3D" id="2.60.120.20">
    <property type="match status" value="1"/>
</dbReference>
<dbReference type="Gene3D" id="6.10.250.1030">
    <property type="match status" value="1"/>
</dbReference>
<dbReference type="Gene3D" id="1.10.8.880">
    <property type="entry name" value="Birnavirus VP3 protein, domain 2"/>
    <property type="match status" value="1"/>
</dbReference>
<dbReference type="Gene3D" id="1.10.150.620">
    <property type="entry name" value="Capsid protein VP3, domain 1"/>
    <property type="match status" value="1"/>
</dbReference>
<dbReference type="Gene3D" id="2.60.120.660">
    <property type="entry name" value="icosahedral virus"/>
    <property type="match status" value="1"/>
</dbReference>
<dbReference type="InterPro" id="IPR002662">
    <property type="entry name" value="Birna_VP2"/>
</dbReference>
<dbReference type="InterPro" id="IPR002663">
    <property type="entry name" value="Birna_VP3"/>
</dbReference>
<dbReference type="InterPro" id="IPR043048">
    <property type="entry name" value="Birna_VP3_dom1"/>
</dbReference>
<dbReference type="InterPro" id="IPR043049">
    <property type="entry name" value="Birna_VP3_dom2"/>
</dbReference>
<dbReference type="InterPro" id="IPR025775">
    <property type="entry name" value="Birna_VP4_Prtase_dom"/>
</dbReference>
<dbReference type="InterPro" id="IPR029053">
    <property type="entry name" value="Viral_coat"/>
</dbReference>
<dbReference type="Pfam" id="PF01766">
    <property type="entry name" value="Birna_VP2"/>
    <property type="match status" value="1"/>
</dbReference>
<dbReference type="Pfam" id="PF01767">
    <property type="entry name" value="Birna_VP3"/>
    <property type="match status" value="1"/>
</dbReference>
<dbReference type="Pfam" id="PF01768">
    <property type="entry name" value="Birna_VP4"/>
    <property type="match status" value="1"/>
</dbReference>
<dbReference type="SUPFAM" id="SSF88633">
    <property type="entry name" value="Positive stranded ssRNA viruses"/>
    <property type="match status" value="1"/>
</dbReference>
<dbReference type="PROSITE" id="PS51548">
    <property type="entry name" value="BIRNAVIRUS_VP4_PRO"/>
    <property type="match status" value="1"/>
</dbReference>
<feature type="chain" id="PRO_0000392590" description="Structural polyprotein">
    <location>
        <begin position="1"/>
        <end position="1012"/>
    </location>
</feature>
<feature type="chain" id="PRO_0000392591" description="Precursor of VP2">
    <location>
        <begin position="1"/>
        <end position="512"/>
    </location>
</feature>
<feature type="chain" id="PRO_0000036768" description="Capsid protein VP2">
    <location>
        <begin position="1"/>
        <end position="441"/>
    </location>
</feature>
<feature type="peptide" id="PRO_0000227835" description="Structural peptide 1" evidence="1">
    <location>
        <begin position="442"/>
        <end position="487"/>
    </location>
</feature>
<feature type="peptide" id="PRO_0000227836" description="Structural peptide 2" evidence="1">
    <location>
        <begin position="488"/>
        <end position="494"/>
    </location>
</feature>
<feature type="peptide" id="PRO_0000227837" description="Structural peptide 3" evidence="1">
    <location>
        <begin position="495"/>
        <end position="501"/>
    </location>
</feature>
<feature type="peptide" id="PRO_0000227838" description="Structural peptide 4" evidence="1">
    <location>
        <begin position="502"/>
        <end position="512"/>
    </location>
</feature>
<feature type="chain" id="PRO_0000227839" description="Protease VP4" evidence="1">
    <location>
        <begin position="513"/>
        <end position="755"/>
    </location>
</feature>
<feature type="chain" id="PRO_0000227840" description="Capsid protein VP3" evidence="1">
    <location>
        <begin position="756"/>
        <end position="1012"/>
    </location>
</feature>
<feature type="domain" description="Peptidase S50" evidence="2">
    <location>
        <begin position="513"/>
        <end position="755"/>
    </location>
</feature>
<feature type="region of interest" description="Disordered" evidence="3">
    <location>
        <begin position="970"/>
        <end position="1012"/>
    </location>
</feature>
<feature type="region of interest" description="Interaction with VP1 protein" evidence="1">
    <location>
        <begin position="1003"/>
        <end position="1012"/>
    </location>
</feature>
<feature type="compositionally biased region" description="Basic residues" evidence="3">
    <location>
        <begin position="975"/>
        <end position="986"/>
    </location>
</feature>
<feature type="active site" description="Nucleophile" evidence="2">
    <location>
        <position position="652"/>
    </location>
</feature>
<feature type="active site" evidence="2">
    <location>
        <position position="692"/>
    </location>
</feature>
<feature type="binding site" evidence="1">
    <location>
        <position position="30"/>
    </location>
    <ligand>
        <name>a divalent metal cation</name>
        <dbReference type="ChEBI" id="CHEBI:60240"/>
        <note>ligand shared between trimeric partners</note>
    </ligand>
</feature>
<feature type="site" description="Cleavage; by protease VP4" evidence="1">
    <location>
        <begin position="441"/>
        <end position="442"/>
    </location>
</feature>
<feature type="site" description="Cleavage; by protease VP4" evidence="1">
    <location>
        <begin position="487"/>
        <end position="488"/>
    </location>
</feature>
<feature type="site" description="Cleavage; by protease VP4" evidence="1">
    <location>
        <begin position="494"/>
        <end position="495"/>
    </location>
</feature>
<feature type="site" description="Cleavage; by protease VP4" evidence="1">
    <location>
        <begin position="501"/>
        <end position="502"/>
    </location>
</feature>
<feature type="site" description="Cleavage; by protease VP4" evidence="1">
    <location>
        <begin position="512"/>
        <end position="513"/>
    </location>
</feature>
<feature type="site" description="Cleavage; by protease VP4" evidence="1">
    <location>
        <begin position="755"/>
        <end position="756"/>
    </location>
</feature>
<feature type="sequence conflict" description="In Ref. 2; BAA00954." evidence="4" ref="2">
    <original>Q</original>
    <variation>S</variation>
    <location>
        <position position="5"/>
    </location>
</feature>
<feature type="sequence conflict" description="In Ref. 2; BAA00954." evidence="4" ref="2">
    <original>C</original>
    <variation>Y</variation>
    <location>
        <position position="262"/>
    </location>
</feature>
<feature type="sequence conflict" description="In Ref. 2; BAA00954." evidence="4" ref="2">
    <original>V</original>
    <variation>L</variation>
    <location>
        <position position="469"/>
    </location>
</feature>
<feature type="sequence conflict" description="In Ref. 2; BAA00954." evidence="4" ref="2">
    <original>R</original>
    <variation>L</variation>
    <location>
        <position position="481"/>
    </location>
</feature>
<feature type="sequence conflict" description="In Ref. 2; BAA00954." evidence="4" ref="2">
    <original>AS</original>
    <variation>KL</variation>
    <location>
        <begin position="495"/>
        <end position="496"/>
    </location>
</feature>
<keyword id="KW-0167">Capsid protein</keyword>
<keyword id="KW-1035">Host cytoplasm</keyword>
<keyword id="KW-0378">Hydrolase</keyword>
<keyword id="KW-0479">Metal-binding</keyword>
<keyword id="KW-0645">Protease</keyword>
<keyword id="KW-0720">Serine protease</keyword>
<keyword id="KW-1146">T=13 icosahedral capsid protein</keyword>
<keyword id="KW-0946">Virion</keyword>
<accession>P29802</accession>
<accession>Q9WHR0</accession>
<comment type="function">
    <text evidence="1">Capsid protein VP2 self assembles to form an icosahedral capsid with a T=13 symmetry, about 70 nm in diameter, and consisting of 260 VP2 trimers. The capsid encapsulates the genomic dsRNA. VP2 is also involved in attachment and entry into the host cell by interacting with host ITGA4/ITGB1 (By similarity).</text>
</comment>
<comment type="function">
    <text evidence="1">The precursor of VP2 plays an important role in capsid assembly. First, pre-VP2 and VP2 oligomers assemble to form a procapsid. Then, the pre-VP2 intermediates may be processed into VP2 proteins by proteolytic cleavage mediated by VP4 to obtain the mature virion. The final capsid is composed of pentamers and hexamers but VP2 has a natural tendency to assemble into all-pentameric structures. Therefore pre-VP2 may be required to allow formation of the hexameric structures (By similarity).</text>
</comment>
<comment type="function">
    <text evidence="2">Protease VP4 is a serine protease that cleaves the polyprotein into its final products. Pre-VP2 is first partially cleaved, and may be completely processed by VP4 upon capsid maturation.</text>
</comment>
<comment type="function">
    <text evidence="1">Capsid protein VP3 plays a key role in virion assembly by providing a scaffold for the capsid made of VP2. May self-assemble to form a T=4-like icosahedral inner-capsid composed of at least 180 trimers. Plays a role in genomic RNA packaging by recruiting VP1 into the capsid and interacting with the dsRNA genome segments to form a ribonucleoprotein complex. Additionally, the interaction of the VP3 C-terminal tail with VP1 removes the inherent structural blockade of the polymerase active site. Thus, VP3 can also function as a transcriptional activator (By similarity).</text>
</comment>
<comment type="function">
    <text evidence="1">Structural peptide 1 is a small peptide derived from pre-VP2 C-terminus. It destabilizes and perforates cell membranes, suggesting a role during entry (By similarity).</text>
</comment>
<comment type="function">
    <text evidence="1">Structural peptide 2 is a small peptide derived from pVP2 C-terminus. It is not essential for the virus viability, but viral growth is affected when missing (By similarity).</text>
</comment>
<comment type="function">
    <text evidence="1">Structural peptide 3 is a small peptide derived from pVP2 C-terminus. It is not essential for the virus viability, but viral growth is affected when missing (By similarity).</text>
</comment>
<comment type="function">
    <text evidence="1">Structural peptide 4 is a small peptide derived from pVP2 C-terminus. It is essential for the virus viability (By similarity).</text>
</comment>
<comment type="subunit">
    <molecule>Capsid protein VP2</molecule>
    <text evidence="1">Homotrimer. A central divalent metal stabilizes the VP2 trimer (By similarity). Interacts with host ITGA4/ITGB1.</text>
</comment>
<comment type="subunit">
    <molecule>Capsid protein VP3</molecule>
    <text evidence="1">Homodimer. Interacts (via C-terminus) with VP1 in the cytoplasm. Interacts with VP2 (By similarity).</text>
</comment>
<comment type="subcellular location">
    <molecule>Capsid protein VP2</molecule>
    <subcellularLocation>
        <location evidence="4">Virion</location>
    </subcellularLocation>
    <subcellularLocation>
        <location evidence="4">Host cytoplasm</location>
    </subcellularLocation>
</comment>
<comment type="subcellular location">
    <molecule>Capsid protein VP3</molecule>
    <subcellularLocation>
        <location evidence="4">Virion</location>
    </subcellularLocation>
    <subcellularLocation>
        <location evidence="4">Host cytoplasm</location>
    </subcellularLocation>
</comment>
<comment type="subcellular location">
    <molecule>Structural peptide 1</molecule>
    <subcellularLocation>
        <location evidence="4">Virion</location>
    </subcellularLocation>
    <subcellularLocation>
        <location evidence="4">Host cytoplasm</location>
    </subcellularLocation>
</comment>
<comment type="subcellular location">
    <molecule>Structural peptide 2</molecule>
    <subcellularLocation>
        <location evidence="4">Virion</location>
    </subcellularLocation>
    <subcellularLocation>
        <location evidence="4">Host cytoplasm</location>
    </subcellularLocation>
</comment>
<comment type="subcellular location">
    <molecule>Structural peptide 3</molecule>
    <subcellularLocation>
        <location evidence="4">Virion</location>
    </subcellularLocation>
    <subcellularLocation>
        <location evidence="4">Host cytoplasm</location>
    </subcellularLocation>
</comment>
<comment type="subcellular location">
    <molecule>Structural peptide 4</molecule>
    <subcellularLocation>
        <location evidence="4">Virion</location>
    </subcellularLocation>
    <subcellularLocation>
        <location evidence="4">Host cytoplasm</location>
    </subcellularLocation>
</comment>
<comment type="PTM">
    <text evidence="1">Specific enzymatic cleavages yield mature proteins. The capsid assembly seems to be regulated by polyprotein processing. The protease VP4 cleaves itself off the polyprotein, thus releasing pre-VP2 and VP3 within the infected cell. During capsid assembly, the C-terminus of pre-VP2 is further processed by VP4, giving rise to VP2, the external capsid protein and three small peptides that all stay closely associated with the capsid (By similarity).</text>
</comment>
<name>POLS_IBDVE</name>
<reference key="1">
    <citation type="journal article" date="1999" name="J. Virol. Methods">
        <title>Amplification and cloning of infectious bursal disease virus genomic RNA segments by long and accurate PCR.</title>
        <authorList>
            <person name="Akin A."/>
            <person name="Wu C.C."/>
            <person name="Lin T.L."/>
        </authorList>
    </citation>
    <scope>NUCLEOTIDE SEQUENCE [GENOMIC RNA]</scope>
</reference>
<reference key="2">
    <citation type="journal article" date="1991" name="J. Gen. Virol.">
        <title>Sequence analysis and expression of the host-protective immunogen VP2 of a variant strain of infectious bursal disease virus which can circumvent vaccination with standard type I strains.</title>
        <authorList>
            <person name="Heine H.G."/>
            <person name="Haritou M."/>
            <person name="Failla P."/>
            <person name="Fahey K.J."/>
            <person name="Azad A.A."/>
        </authorList>
    </citation>
    <scope>NUCLEOTIDE SEQUENCE [GENOMIC RNA]</scope>
</reference>
<organism>
    <name type="scientific">Avian infectious bursal disease virus (strain E)</name>
    <name type="common">IBDV</name>
    <name type="synonym">Gumboro disease virus</name>
    <dbReference type="NCBI Taxonomy" id="31560"/>
    <lineage>
        <taxon>Viruses</taxon>
        <taxon>Riboviria</taxon>
        <taxon>Orthornavirae</taxon>
        <taxon>Birnaviridae</taxon>
        <taxon>Avibirnavirus</taxon>
        <taxon>Avibirnavirus gumboroense</taxon>
    </lineage>
</organism>
<proteinExistence type="inferred from homology"/>
<organismHost>
    <name type="scientific">Gallus gallus</name>
    <name type="common">Chicken</name>
    <dbReference type="NCBI Taxonomy" id="9031"/>
</organismHost>
<organismHost>
    <name type="scientific">Meleagris gallopavo</name>
    <name type="common">Wild turkey</name>
    <dbReference type="NCBI Taxonomy" id="9103"/>
</organismHost>
<sequence>MTNLQDQTQQIVPFIRSLLMPTTGPASIPDDTLEKHTLRSETSTYNLTVGDTGSGLIVFFPGFPGSIVGAHYTLQSNGNYKFDQMLLTAQNLPASYNYCRLVSRSLTVRSSTLPGGVYALNGTINAVTFQGSLSELTDVSYNGLMSATANINDKIGNVLVGEGVTVLSLPTSYDLGYVRLGDPIPAIGLDPKMVATCDSSDRPRVYTITAADNYQFSSQYQTGGVTITLFSANIDAITSLSVGGELVFKTSVQSLVLGATICLIGFDGTAVITRAVAANNGLTAGIDNLMPFNLVIPTNEITQPITSIKLEIVTSKSDGQAGEQMSWSASGSLAVTIHGGNYPGALRPVTLVAYERVATGSVVTVAGVSNFELIPNPELAKNLVTEYGRFDPGAMNYTKLILSERDRLGIKTVWPTREYTDFREYFMEVADLNSPLKIAGAFGFKDIIRAIRRIAVPVVSTLFPPAAPVAHAIGEGVDYLRGDEAQAASGTARAASGKARAASGRIRQLTLAADKGYEVVANLFQVPQNPVVDGILASPGILRGAHNLDCVLREGATLFPVVITTVEDAMTPKALNNKMFAVIEGVREDLQPPSQRGSFIRTLSGHRVYGYAPDGVLPLETGRDYTVVPIDDVWDDSIMLSKDPIPPIVGNSGNLAIAYMDVFRPKVPIHVAMTGALNACGEIEKISFRSTKLATAHRLGLKLAGPGAFDVNTGPNWATFIKRFPHNPRDWDRLPYLNLPYLPPNAGRQYHLAMAASEFKETPELESAVRAMEAAANVDPLFQSALSVFMWLEENGIVTDMANFALSDPNAHRMRNFLANALQAGSKSQRAKYGTAGYGVEARGPTLEGAQREKDTRISKKMETMGIYFATQEWVAFNRHRRPSPGQLKYWQNTREIPDPNEYYLDYVHAEKSRLASEEQILRAATSIYGAPVQAEPLQAFIDEVAKVYEINHGRGPNQEQMKDLLLTAMEMKHRNPRRAPPKPKPKPNAPTQRPPGRLGRWIRTVSDEDLE</sequence>
<protein>
    <recommendedName>
        <fullName>Structural polyprotein</fullName>
        <shortName>PP</shortName>
    </recommendedName>
    <component>
        <recommendedName>
            <fullName>Precursor of VP2</fullName>
            <shortName>Pre-VP2</shortName>
        </recommendedName>
    </component>
    <component>
        <recommendedName>
            <fullName>Capsid protein VP2</fullName>
        </recommendedName>
    </component>
    <component>
        <recommendedName>
            <fullName>Structural peptide 1</fullName>
            <shortName>p1</shortName>
        </recommendedName>
        <alternativeName>
            <fullName>pep46</fullName>
        </alternativeName>
    </component>
    <component>
        <recommendedName>
            <fullName>Structural peptide 2</fullName>
            <shortName>p2</shortName>
        </recommendedName>
        <alternativeName>
            <fullName>pep7a</fullName>
        </alternativeName>
    </component>
    <component>
        <recommendedName>
            <fullName>Structural peptide 3</fullName>
            <shortName>p3</shortName>
        </recommendedName>
        <alternativeName>
            <fullName>pep7b</fullName>
        </alternativeName>
    </component>
    <component>
        <recommendedName>
            <fullName>Structural peptide 4</fullName>
            <shortName>p4</shortName>
        </recommendedName>
        <alternativeName>
            <fullName>pep11</fullName>
        </alternativeName>
    </component>
    <component>
        <recommendedName>
            <fullName>Protease VP4</fullName>
            <ecNumber>3.4.21.-</ecNumber>
        </recommendedName>
        <alternativeName>
            <fullName>Non-structural protein VP4</fullName>
            <shortName>NS</shortName>
        </alternativeName>
    </component>
    <component>
        <recommendedName>
            <fullName>Capsid protein VP3</fullName>
        </recommendedName>
    </component>
</protein>
<evidence type="ECO:0000250" key="1"/>
<evidence type="ECO:0000255" key="2">
    <source>
        <dbReference type="PROSITE-ProRule" id="PRU00881"/>
    </source>
</evidence>
<evidence type="ECO:0000256" key="3">
    <source>
        <dbReference type="SAM" id="MobiDB-lite"/>
    </source>
</evidence>
<evidence type="ECO:0000305" key="4"/>